<sequence length="127" mass="14529">MNQCKVMNDGYLEKRSNGLLQLWKKKRCVLSDEGLRLYGCKGDSGKEMRFEQMTTLDCVEYKRGLVYFTIVMNDGKEVDFRCQQEGTAWNAEIALALVRFKNRVAVQTGRNRHLSHLGSCGEGDVEL</sequence>
<reference key="1">
    <citation type="journal article" date="2013" name="Nature">
        <title>The zebrafish reference genome sequence and its relationship to the human genome.</title>
        <authorList>
            <person name="Howe K."/>
            <person name="Clark M.D."/>
            <person name="Torroja C.F."/>
            <person name="Torrance J."/>
            <person name="Berthelot C."/>
            <person name="Muffato M."/>
            <person name="Collins J.E."/>
            <person name="Humphray S."/>
            <person name="McLaren K."/>
            <person name="Matthews L."/>
            <person name="McLaren S."/>
            <person name="Sealy I."/>
            <person name="Caccamo M."/>
            <person name="Churcher C."/>
            <person name="Scott C."/>
            <person name="Barrett J.C."/>
            <person name="Koch R."/>
            <person name="Rauch G.J."/>
            <person name="White S."/>
            <person name="Chow W."/>
            <person name="Kilian B."/>
            <person name="Quintais L.T."/>
            <person name="Guerra-Assuncao J.A."/>
            <person name="Zhou Y."/>
            <person name="Gu Y."/>
            <person name="Yen J."/>
            <person name="Vogel J.H."/>
            <person name="Eyre T."/>
            <person name="Redmond S."/>
            <person name="Banerjee R."/>
            <person name="Chi J."/>
            <person name="Fu B."/>
            <person name="Langley E."/>
            <person name="Maguire S.F."/>
            <person name="Laird G.K."/>
            <person name="Lloyd D."/>
            <person name="Kenyon E."/>
            <person name="Donaldson S."/>
            <person name="Sehra H."/>
            <person name="Almeida-King J."/>
            <person name="Loveland J."/>
            <person name="Trevanion S."/>
            <person name="Jones M."/>
            <person name="Quail M."/>
            <person name="Willey D."/>
            <person name="Hunt A."/>
            <person name="Burton J."/>
            <person name="Sims S."/>
            <person name="McLay K."/>
            <person name="Plumb B."/>
            <person name="Davis J."/>
            <person name="Clee C."/>
            <person name="Oliver K."/>
            <person name="Clark R."/>
            <person name="Riddle C."/>
            <person name="Elliot D."/>
            <person name="Threadgold G."/>
            <person name="Harden G."/>
            <person name="Ware D."/>
            <person name="Begum S."/>
            <person name="Mortimore B."/>
            <person name="Kerry G."/>
            <person name="Heath P."/>
            <person name="Phillimore B."/>
            <person name="Tracey A."/>
            <person name="Corby N."/>
            <person name="Dunn M."/>
            <person name="Johnson C."/>
            <person name="Wood J."/>
            <person name="Clark S."/>
            <person name="Pelan S."/>
            <person name="Griffiths G."/>
            <person name="Smith M."/>
            <person name="Glithero R."/>
            <person name="Howden P."/>
            <person name="Barker N."/>
            <person name="Lloyd C."/>
            <person name="Stevens C."/>
            <person name="Harley J."/>
            <person name="Holt K."/>
            <person name="Panagiotidis G."/>
            <person name="Lovell J."/>
            <person name="Beasley H."/>
            <person name="Henderson C."/>
            <person name="Gordon D."/>
            <person name="Auger K."/>
            <person name="Wright D."/>
            <person name="Collins J."/>
            <person name="Raisen C."/>
            <person name="Dyer L."/>
            <person name="Leung K."/>
            <person name="Robertson L."/>
            <person name="Ambridge K."/>
            <person name="Leongamornlert D."/>
            <person name="McGuire S."/>
            <person name="Gilderthorp R."/>
            <person name="Griffiths C."/>
            <person name="Manthravadi D."/>
            <person name="Nichol S."/>
            <person name="Barker G."/>
            <person name="Whitehead S."/>
            <person name="Kay M."/>
            <person name="Brown J."/>
            <person name="Murnane C."/>
            <person name="Gray E."/>
            <person name="Humphries M."/>
            <person name="Sycamore N."/>
            <person name="Barker D."/>
            <person name="Saunders D."/>
            <person name="Wallis J."/>
            <person name="Babbage A."/>
            <person name="Hammond S."/>
            <person name="Mashreghi-Mohammadi M."/>
            <person name="Barr L."/>
            <person name="Martin S."/>
            <person name="Wray P."/>
            <person name="Ellington A."/>
            <person name="Matthews N."/>
            <person name="Ellwood M."/>
            <person name="Woodmansey R."/>
            <person name="Clark G."/>
            <person name="Cooper J."/>
            <person name="Tromans A."/>
            <person name="Grafham D."/>
            <person name="Skuce C."/>
            <person name="Pandian R."/>
            <person name="Andrews R."/>
            <person name="Harrison E."/>
            <person name="Kimberley A."/>
            <person name="Garnett J."/>
            <person name="Fosker N."/>
            <person name="Hall R."/>
            <person name="Garner P."/>
            <person name="Kelly D."/>
            <person name="Bird C."/>
            <person name="Palmer S."/>
            <person name="Gehring I."/>
            <person name="Berger A."/>
            <person name="Dooley C.M."/>
            <person name="Ersan-Urun Z."/>
            <person name="Eser C."/>
            <person name="Geiger H."/>
            <person name="Geisler M."/>
            <person name="Karotki L."/>
            <person name="Kirn A."/>
            <person name="Konantz J."/>
            <person name="Konantz M."/>
            <person name="Oberlander M."/>
            <person name="Rudolph-Geiger S."/>
            <person name="Teucke M."/>
            <person name="Lanz C."/>
            <person name="Raddatz G."/>
            <person name="Osoegawa K."/>
            <person name="Zhu B."/>
            <person name="Rapp A."/>
            <person name="Widaa S."/>
            <person name="Langford C."/>
            <person name="Yang F."/>
            <person name="Schuster S.C."/>
            <person name="Carter N.P."/>
            <person name="Harrow J."/>
            <person name="Ning Z."/>
            <person name="Herrero J."/>
            <person name="Searle S.M."/>
            <person name="Enright A."/>
            <person name="Geisler R."/>
            <person name="Plasterk R.H."/>
            <person name="Lee C."/>
            <person name="Westerfield M."/>
            <person name="de Jong P.J."/>
            <person name="Zon L.I."/>
            <person name="Postlethwait J.H."/>
            <person name="Nusslein-Volhard C."/>
            <person name="Hubbard T.J."/>
            <person name="Roest Crollius H."/>
            <person name="Rogers J."/>
            <person name="Stemple D.L."/>
        </authorList>
    </citation>
    <scope>NUCLEOTIDE SEQUENCE [LARGE SCALE GENOMIC DNA]</scope>
    <source>
        <strain>Tuebingen</strain>
    </source>
</reference>
<reference key="2">
    <citation type="submission" date="2004-07" db="EMBL/GenBank/DDBJ databases">
        <authorList>
            <consortium name="NIH - Zebrafish Gene Collection (ZGC) project"/>
        </authorList>
    </citation>
    <scope>NUCLEOTIDE SEQUENCE [LARGE SCALE MRNA]</scope>
</reference>
<dbReference type="EMBL" id="AL662880">
    <property type="protein sequence ID" value="CAD59121.1"/>
    <property type="molecule type" value="Genomic_DNA"/>
</dbReference>
<dbReference type="EMBL" id="BC076016">
    <property type="protein sequence ID" value="AAH76016.1"/>
    <property type="molecule type" value="mRNA"/>
</dbReference>
<dbReference type="RefSeq" id="NP_001002455.1">
    <property type="nucleotide sequence ID" value="NM_001002455.1"/>
</dbReference>
<dbReference type="SMR" id="Q8AW35"/>
<dbReference type="STRING" id="7955.ENSDARP00000055086"/>
<dbReference type="PaxDb" id="7955-ENSDARP00000055086"/>
<dbReference type="DNASU" id="368779"/>
<dbReference type="Ensembl" id="ENSDART00000055087">
    <property type="protein sequence ID" value="ENSDARP00000055086"/>
    <property type="gene ID" value="ENSDARG00000037804"/>
</dbReference>
<dbReference type="GeneID" id="368779"/>
<dbReference type="KEGG" id="dre:368779"/>
<dbReference type="AGR" id="ZFIN:ZDB-GENE-030616-267"/>
<dbReference type="CTD" id="23612"/>
<dbReference type="ZFIN" id="ZDB-GENE-030616-267">
    <property type="gene designation" value="phlda3"/>
</dbReference>
<dbReference type="eggNOG" id="ENOG502S2UN">
    <property type="taxonomic scope" value="Eukaryota"/>
</dbReference>
<dbReference type="HOGENOM" id="CLU_062639_1_0_1"/>
<dbReference type="InParanoid" id="Q8AW35"/>
<dbReference type="OMA" id="PSWNADI"/>
<dbReference type="OrthoDB" id="9630709at2759"/>
<dbReference type="PhylomeDB" id="Q8AW35"/>
<dbReference type="TreeFam" id="TF332320"/>
<dbReference type="PRO" id="PR:Q8AW35"/>
<dbReference type="Proteomes" id="UP000000437">
    <property type="component" value="Chromosome 23"/>
</dbReference>
<dbReference type="Bgee" id="ENSDARG00000037804">
    <property type="expression patterns" value="Expressed in spleen and 27 other cell types or tissues"/>
</dbReference>
<dbReference type="GO" id="GO:0005737">
    <property type="term" value="C:cytoplasm"/>
    <property type="evidence" value="ECO:0007669"/>
    <property type="project" value="UniProtKB-SubCell"/>
</dbReference>
<dbReference type="GO" id="GO:0005886">
    <property type="term" value="C:plasma membrane"/>
    <property type="evidence" value="ECO:0000250"/>
    <property type="project" value="UniProtKB"/>
</dbReference>
<dbReference type="GO" id="GO:0005547">
    <property type="term" value="F:phosphatidylinositol-3,4,5-trisphosphate binding"/>
    <property type="evidence" value="ECO:0000250"/>
    <property type="project" value="UniProtKB"/>
</dbReference>
<dbReference type="GO" id="GO:0043325">
    <property type="term" value="F:phosphatidylinositol-3,4-bisphosphate binding"/>
    <property type="evidence" value="ECO:0000250"/>
    <property type="project" value="UniProtKB"/>
</dbReference>
<dbReference type="GO" id="GO:0080025">
    <property type="term" value="F:phosphatidylinositol-3,5-bisphosphate binding"/>
    <property type="evidence" value="ECO:0000250"/>
    <property type="project" value="UniProtKB"/>
</dbReference>
<dbReference type="GO" id="GO:0032266">
    <property type="term" value="F:phosphatidylinositol-3-phosphate binding"/>
    <property type="evidence" value="ECO:0000250"/>
    <property type="project" value="UniProtKB"/>
</dbReference>
<dbReference type="GO" id="GO:0005546">
    <property type="term" value="F:phosphatidylinositol-4,5-bisphosphate binding"/>
    <property type="evidence" value="ECO:0000250"/>
    <property type="project" value="UniProtKB"/>
</dbReference>
<dbReference type="GO" id="GO:0010314">
    <property type="term" value="F:phosphatidylinositol-5-phosphate binding"/>
    <property type="evidence" value="ECO:0000250"/>
    <property type="project" value="UniProtKB"/>
</dbReference>
<dbReference type="GO" id="GO:0042771">
    <property type="term" value="P:intrinsic apoptotic signaling pathway in response to DNA damage by p53 class mediator"/>
    <property type="evidence" value="ECO:0000250"/>
    <property type="project" value="UniProtKB"/>
</dbReference>
<dbReference type="GO" id="GO:0051898">
    <property type="term" value="P:negative regulation of phosphatidylinositol 3-kinase/protein kinase B signal transduction"/>
    <property type="evidence" value="ECO:0000250"/>
    <property type="project" value="UniProtKB"/>
</dbReference>
<dbReference type="GO" id="GO:0043065">
    <property type="term" value="P:positive regulation of apoptotic process"/>
    <property type="evidence" value="ECO:0000250"/>
    <property type="project" value="UniProtKB"/>
</dbReference>
<dbReference type="Gene3D" id="2.30.29.30">
    <property type="entry name" value="Pleckstrin-homology domain (PH domain)/Phosphotyrosine-binding domain (PTB)"/>
    <property type="match status" value="1"/>
</dbReference>
<dbReference type="InterPro" id="IPR011993">
    <property type="entry name" value="PH-like_dom_sf"/>
</dbReference>
<dbReference type="InterPro" id="IPR001849">
    <property type="entry name" value="PH_domain"/>
</dbReference>
<dbReference type="InterPro" id="IPR042832">
    <property type="entry name" value="PHLA1/2/3"/>
</dbReference>
<dbReference type="PANTHER" id="PTHR15478:SF12">
    <property type="entry name" value="PLECKSTRIN HOMOLOGY-LIKE DOMAIN FAMILY A MEMBER 3"/>
    <property type="match status" value="1"/>
</dbReference>
<dbReference type="PANTHER" id="PTHR15478">
    <property type="entry name" value="PLECKSTRIN HOMOLOGY-LIKE DOMAIN, PQ-RICH PROTEIN"/>
    <property type="match status" value="1"/>
</dbReference>
<dbReference type="SMART" id="SM00233">
    <property type="entry name" value="PH"/>
    <property type="match status" value="1"/>
</dbReference>
<dbReference type="SUPFAM" id="SSF50729">
    <property type="entry name" value="PH domain-like"/>
    <property type="match status" value="1"/>
</dbReference>
<proteinExistence type="evidence at transcript level"/>
<protein>
    <recommendedName>
        <fullName>Pleckstrin homology-like domain family A member 3</fullName>
    </recommendedName>
    <alternativeName>
        <fullName>TDAG51/Ipl homolog 1</fullName>
    </alternativeName>
</protein>
<keyword id="KW-0053">Apoptosis</keyword>
<keyword id="KW-0963">Cytoplasm</keyword>
<keyword id="KW-0472">Membrane</keyword>
<keyword id="KW-1185">Reference proteome</keyword>
<keyword id="KW-0043">Tumor suppressor</keyword>
<evidence type="ECO:0000250" key="1"/>
<evidence type="ECO:0000305" key="2"/>
<gene>
    <name type="primary">phlda3</name>
    <name type="synonym">tih1</name>
    <name type="ORF">si:dZ182N13.5</name>
    <name type="ORF">zgc:92333</name>
</gene>
<feature type="chain" id="PRO_0000369391" description="Pleckstrin homology-like domain family A member 3">
    <location>
        <begin position="1"/>
        <end position="127"/>
    </location>
</feature>
<feature type="domain" description="PH">
    <location>
        <begin position="5"/>
        <end position="108"/>
    </location>
</feature>
<name>PHLA3_DANRE</name>
<comment type="function">
    <text evidence="1">p53/tp53-regulated repressor of Akt/akt1 signaling. Represses akt1 by preventing akt1-binding to membrane lipids, thereby inhibiting akt1 translocation to the cellular membrane and activation. Contributes to p53/tp53-dependent apoptosis by repressing akt1 activity. Its direct transcription regulation by p53/tp53 may explain how p53/tp53 can negatively regulate akt1. May act as a tumor suppressor (By similarity).</text>
</comment>
<comment type="subcellular location">
    <subcellularLocation>
        <location evidence="1">Cytoplasm</location>
    </subcellularLocation>
    <subcellularLocation>
        <location evidence="1">Membrane</location>
        <topology evidence="1">Peripheral membrane protein</topology>
    </subcellularLocation>
</comment>
<comment type="domain">
    <text evidence="1">The PH domain binds phosphoinositides with a broad specificity. It competes with the PH domain of akt1 and directly interferes with akt1 binding to phosphatidylinositol 4,5-bisphosphate (PIP2) and phosphatidylinositol 3,4,5-trisphosphate (PIP3), preventing akt1 association to membrane lipids and subsequent activation of akt1 signaling (By similarity).</text>
</comment>
<comment type="similarity">
    <text evidence="2">Belongs to the PHLDA3 family.</text>
</comment>
<accession>Q8AW35</accession>
<organism>
    <name type="scientific">Danio rerio</name>
    <name type="common">Zebrafish</name>
    <name type="synonym">Brachydanio rerio</name>
    <dbReference type="NCBI Taxonomy" id="7955"/>
    <lineage>
        <taxon>Eukaryota</taxon>
        <taxon>Metazoa</taxon>
        <taxon>Chordata</taxon>
        <taxon>Craniata</taxon>
        <taxon>Vertebrata</taxon>
        <taxon>Euteleostomi</taxon>
        <taxon>Actinopterygii</taxon>
        <taxon>Neopterygii</taxon>
        <taxon>Teleostei</taxon>
        <taxon>Ostariophysi</taxon>
        <taxon>Cypriniformes</taxon>
        <taxon>Danionidae</taxon>
        <taxon>Danioninae</taxon>
        <taxon>Danio</taxon>
    </lineage>
</organism>